<accession>A8WQQ5</accession>
<accession>H8WH59</accession>
<feature type="chain" id="PRO_0000351213" description="Putative exosome complex component RRP41">
    <location>
        <begin position="1"/>
        <end position="240"/>
    </location>
</feature>
<reference key="1">
    <citation type="journal article" date="2003" name="PLoS Biol.">
        <title>The genome sequence of Caenorhabditis briggsae: a platform for comparative genomics.</title>
        <authorList>
            <person name="Stein L.D."/>
            <person name="Bao Z."/>
            <person name="Blasiar D."/>
            <person name="Blumenthal T."/>
            <person name="Brent M.R."/>
            <person name="Chen N."/>
            <person name="Chinwalla A."/>
            <person name="Clarke L."/>
            <person name="Clee C."/>
            <person name="Coghlan A."/>
            <person name="Coulson A."/>
            <person name="D'Eustachio P."/>
            <person name="Fitch D.H.A."/>
            <person name="Fulton L.A."/>
            <person name="Fulton R.E."/>
            <person name="Griffiths-Jones S."/>
            <person name="Harris T.W."/>
            <person name="Hillier L.W."/>
            <person name="Kamath R."/>
            <person name="Kuwabara P.E."/>
            <person name="Mardis E.R."/>
            <person name="Marra M.A."/>
            <person name="Miner T.L."/>
            <person name="Minx P."/>
            <person name="Mullikin J.C."/>
            <person name="Plumb R.W."/>
            <person name="Rogers J."/>
            <person name="Schein J.E."/>
            <person name="Sohrmann M."/>
            <person name="Spieth J."/>
            <person name="Stajich J.E."/>
            <person name="Wei C."/>
            <person name="Willey D."/>
            <person name="Wilson R.K."/>
            <person name="Durbin R.M."/>
            <person name="Waterston R.H."/>
        </authorList>
    </citation>
    <scope>NUCLEOTIDE SEQUENCE [LARGE SCALE GENOMIC DNA]</scope>
    <source>
        <strain>AF16</strain>
    </source>
</reference>
<keyword id="KW-0963">Cytoplasm</keyword>
<keyword id="KW-0271">Exosome</keyword>
<keyword id="KW-0539">Nucleus</keyword>
<keyword id="KW-1185">Reference proteome</keyword>
<keyword id="KW-0694">RNA-binding</keyword>
<keyword id="KW-0698">rRNA processing</keyword>
<sequence>MSIISEHGFRMDGRRPAQIRNINTRLGLNRNAEGSCYLEHGNTKVLCAVYGPYESKASKRLEDRCAIVCQYSTTTFSGLERKNRPRGDRKSTEISRLLEKAFESVILTESFPRSQIDIFCEVIQGDGSNLAACVNATSLALADAGIPMKGIASAATCGIVETKPIVDLTSREETDLLPRVTLATICGRDEVILVELQNRLHIDHLSVVMDAAKATCADVYECLAVVAQQHLKACAPILGN</sequence>
<dbReference type="EMBL" id="HE601298">
    <property type="protein sequence ID" value="CCG58551.1"/>
    <property type="molecule type" value="Genomic_DNA"/>
</dbReference>
<dbReference type="SMR" id="A8WQQ5"/>
<dbReference type="FunCoup" id="A8WQQ5">
    <property type="interactions" value="2118"/>
</dbReference>
<dbReference type="STRING" id="6238.A8WQQ5"/>
<dbReference type="EnsemblMetazoa" id="CBG01825.1">
    <property type="protein sequence ID" value="CBG01825.1"/>
    <property type="gene ID" value="WBGene00025010"/>
</dbReference>
<dbReference type="KEGG" id="cbr:CBG_01825"/>
<dbReference type="CTD" id="8576249"/>
<dbReference type="WormBase" id="CBG01825">
    <property type="protein sequence ID" value="CBP00395"/>
    <property type="gene ID" value="WBGene00025010"/>
    <property type="gene designation" value="Cbr-exos-4.1"/>
</dbReference>
<dbReference type="eggNOG" id="KOG1068">
    <property type="taxonomic scope" value="Eukaryota"/>
</dbReference>
<dbReference type="HOGENOM" id="CLU_063514_0_0_1"/>
<dbReference type="InParanoid" id="A8WQQ5"/>
<dbReference type="OMA" id="ECRINTH"/>
<dbReference type="Proteomes" id="UP000008549">
    <property type="component" value="Unassembled WGS sequence"/>
</dbReference>
<dbReference type="GO" id="GO:0000177">
    <property type="term" value="C:cytoplasmic exosome (RNase complex)"/>
    <property type="evidence" value="ECO:0000318"/>
    <property type="project" value="GO_Central"/>
</dbReference>
<dbReference type="GO" id="GO:0000176">
    <property type="term" value="C:nuclear exosome (RNase complex)"/>
    <property type="evidence" value="ECO:0000318"/>
    <property type="project" value="GO_Central"/>
</dbReference>
<dbReference type="GO" id="GO:0005730">
    <property type="term" value="C:nucleolus"/>
    <property type="evidence" value="ECO:0000318"/>
    <property type="project" value="GO_Central"/>
</dbReference>
<dbReference type="GO" id="GO:0005654">
    <property type="term" value="C:nucleoplasm"/>
    <property type="evidence" value="ECO:0007669"/>
    <property type="project" value="UniProtKB-SubCell"/>
</dbReference>
<dbReference type="GO" id="GO:0003723">
    <property type="term" value="F:RNA binding"/>
    <property type="evidence" value="ECO:0000318"/>
    <property type="project" value="GO_Central"/>
</dbReference>
<dbReference type="GO" id="GO:0071028">
    <property type="term" value="P:nuclear mRNA surveillance"/>
    <property type="evidence" value="ECO:0000318"/>
    <property type="project" value="GO_Central"/>
</dbReference>
<dbReference type="GO" id="GO:0071051">
    <property type="term" value="P:poly(A)-dependent snoRNA 3'-end processing"/>
    <property type="evidence" value="ECO:0000318"/>
    <property type="project" value="GO_Central"/>
</dbReference>
<dbReference type="GO" id="GO:0016075">
    <property type="term" value="P:rRNA catabolic process"/>
    <property type="evidence" value="ECO:0000318"/>
    <property type="project" value="GO_Central"/>
</dbReference>
<dbReference type="GO" id="GO:0006364">
    <property type="term" value="P:rRNA processing"/>
    <property type="evidence" value="ECO:0007669"/>
    <property type="project" value="UniProtKB-KW"/>
</dbReference>
<dbReference type="GO" id="GO:0034475">
    <property type="term" value="P:U4 snRNA 3'-end processing"/>
    <property type="evidence" value="ECO:0000318"/>
    <property type="project" value="GO_Central"/>
</dbReference>
<dbReference type="CDD" id="cd11370">
    <property type="entry name" value="RNase_PH_RRP41"/>
    <property type="match status" value="1"/>
</dbReference>
<dbReference type="FunFam" id="3.30.230.70:FF:000004">
    <property type="entry name" value="Exosome complex component Rrp41"/>
    <property type="match status" value="1"/>
</dbReference>
<dbReference type="Gene3D" id="3.30.230.70">
    <property type="entry name" value="GHMP Kinase, N-terminal domain"/>
    <property type="match status" value="1"/>
</dbReference>
<dbReference type="InterPro" id="IPR001247">
    <property type="entry name" value="ExoRNase_PH_dom1"/>
</dbReference>
<dbReference type="InterPro" id="IPR015847">
    <property type="entry name" value="ExoRNase_PH_dom2"/>
</dbReference>
<dbReference type="InterPro" id="IPR036345">
    <property type="entry name" value="ExoRNase_PH_dom2_sf"/>
</dbReference>
<dbReference type="InterPro" id="IPR027408">
    <property type="entry name" value="PNPase/RNase_PH_dom_sf"/>
</dbReference>
<dbReference type="InterPro" id="IPR020568">
    <property type="entry name" value="Ribosomal_Su5_D2-typ_SF"/>
</dbReference>
<dbReference type="InterPro" id="IPR050080">
    <property type="entry name" value="RNase_PH"/>
</dbReference>
<dbReference type="InterPro" id="IPR018336">
    <property type="entry name" value="RNase_PH_CS"/>
</dbReference>
<dbReference type="PANTHER" id="PTHR11953">
    <property type="entry name" value="EXOSOME COMPLEX COMPONENT"/>
    <property type="match status" value="1"/>
</dbReference>
<dbReference type="PANTHER" id="PTHR11953:SF0">
    <property type="entry name" value="EXOSOME COMPLEX COMPONENT RRP41"/>
    <property type="match status" value="1"/>
</dbReference>
<dbReference type="Pfam" id="PF01138">
    <property type="entry name" value="RNase_PH"/>
    <property type="match status" value="1"/>
</dbReference>
<dbReference type="Pfam" id="PF03725">
    <property type="entry name" value="RNase_PH_C"/>
    <property type="match status" value="1"/>
</dbReference>
<dbReference type="SUPFAM" id="SSF55666">
    <property type="entry name" value="Ribonuclease PH domain 2-like"/>
    <property type="match status" value="1"/>
</dbReference>
<dbReference type="SUPFAM" id="SSF54211">
    <property type="entry name" value="Ribosomal protein S5 domain 2-like"/>
    <property type="match status" value="1"/>
</dbReference>
<dbReference type="PROSITE" id="PS01277">
    <property type="entry name" value="RIBONUCLEASE_PH"/>
    <property type="match status" value="1"/>
</dbReference>
<protein>
    <recommendedName>
        <fullName>Putative exosome complex component RRP41</fullName>
    </recommendedName>
</protein>
<comment type="function">
    <text evidence="1">Non-catalytic component of the RNA exosome complex which has 3'-&gt;5' exoribonuclease activity and participates in a multitude of cellular RNA processing and degradation events.</text>
</comment>
<comment type="subunit">
    <text evidence="1">Component of the RNA exosome complex.</text>
</comment>
<comment type="subcellular location">
    <subcellularLocation>
        <location evidence="1">Cytoplasm</location>
    </subcellularLocation>
    <subcellularLocation>
        <location evidence="1">Nucleus</location>
        <location evidence="1">Nucleolus</location>
    </subcellularLocation>
    <subcellularLocation>
        <location evidence="1">Nucleus</location>
    </subcellularLocation>
    <subcellularLocation>
        <location evidence="1">Nucleus</location>
        <location evidence="1">Nucleoplasm</location>
    </subcellularLocation>
</comment>
<comment type="similarity">
    <text evidence="2">Belongs to the RNase PH family.</text>
</comment>
<organism>
    <name type="scientific">Caenorhabditis briggsae</name>
    <dbReference type="NCBI Taxonomy" id="6238"/>
    <lineage>
        <taxon>Eukaryota</taxon>
        <taxon>Metazoa</taxon>
        <taxon>Ecdysozoa</taxon>
        <taxon>Nematoda</taxon>
        <taxon>Chromadorea</taxon>
        <taxon>Rhabditida</taxon>
        <taxon>Rhabditina</taxon>
        <taxon>Rhabditomorpha</taxon>
        <taxon>Rhabditoidea</taxon>
        <taxon>Rhabditidae</taxon>
        <taxon>Peloderinae</taxon>
        <taxon>Caenorhabditis</taxon>
    </lineage>
</organism>
<proteinExistence type="inferred from homology"/>
<name>EXOS4_CAEBR</name>
<evidence type="ECO:0000250" key="1">
    <source>
        <dbReference type="UniProtKB" id="Q9NPD3"/>
    </source>
</evidence>
<evidence type="ECO:0000255" key="2"/>
<gene>
    <name type="primary">exos-4.1</name>
    <name type="ORF">CBG01825</name>
</gene>